<name>RLMM_HAEIN</name>
<accession>P45100</accession>
<proteinExistence type="inferred from homology"/>
<evidence type="ECO:0000255" key="1">
    <source>
        <dbReference type="HAMAP-Rule" id="MF_01551"/>
    </source>
</evidence>
<evidence type="ECO:0000305" key="2"/>
<feature type="chain" id="PRO_0000070406" description="Ribosomal RNA large subunit methyltransferase M">
    <location>
        <begin position="1"/>
        <end position="363"/>
    </location>
</feature>
<feature type="active site" description="Proton acceptor" evidence="1">
    <location>
        <position position="313"/>
    </location>
</feature>
<feature type="binding site" evidence="1">
    <location>
        <position position="194"/>
    </location>
    <ligand>
        <name>S-adenosyl-L-methionine</name>
        <dbReference type="ChEBI" id="CHEBI:59789"/>
    </ligand>
</feature>
<feature type="binding site" evidence="1">
    <location>
        <begin position="227"/>
        <end position="230"/>
    </location>
    <ligand>
        <name>S-adenosyl-L-methionine</name>
        <dbReference type="ChEBI" id="CHEBI:59789"/>
    </ligand>
</feature>
<feature type="binding site" evidence="1">
    <location>
        <position position="246"/>
    </location>
    <ligand>
        <name>S-adenosyl-L-methionine</name>
        <dbReference type="ChEBI" id="CHEBI:59789"/>
    </ligand>
</feature>
<feature type="binding site" evidence="1">
    <location>
        <position position="266"/>
    </location>
    <ligand>
        <name>S-adenosyl-L-methionine</name>
        <dbReference type="ChEBI" id="CHEBI:59789"/>
    </ligand>
</feature>
<feature type="binding site" evidence="1">
    <location>
        <position position="284"/>
    </location>
    <ligand>
        <name>S-adenosyl-L-methionine</name>
        <dbReference type="ChEBI" id="CHEBI:59789"/>
    </ligand>
</feature>
<comment type="function">
    <text evidence="1">Catalyzes the 2'-O-methylation at nucleotide C2498 in 23S rRNA.</text>
</comment>
<comment type="catalytic activity">
    <reaction evidence="1">
        <text>cytidine(2498) in 23S rRNA + S-adenosyl-L-methionine = 2'-O-methylcytidine(2498) in 23S rRNA + S-adenosyl-L-homocysteine + H(+)</text>
        <dbReference type="Rhea" id="RHEA:42788"/>
        <dbReference type="Rhea" id="RHEA-COMP:10244"/>
        <dbReference type="Rhea" id="RHEA-COMP:10245"/>
        <dbReference type="ChEBI" id="CHEBI:15378"/>
        <dbReference type="ChEBI" id="CHEBI:57856"/>
        <dbReference type="ChEBI" id="CHEBI:59789"/>
        <dbReference type="ChEBI" id="CHEBI:74495"/>
        <dbReference type="ChEBI" id="CHEBI:82748"/>
        <dbReference type="EC" id="2.1.1.186"/>
    </reaction>
</comment>
<comment type="subunit">
    <text evidence="1">Monomer.</text>
</comment>
<comment type="subcellular location">
    <subcellularLocation>
        <location evidence="1">Cytoplasm</location>
    </subcellularLocation>
</comment>
<comment type="similarity">
    <text evidence="1">Belongs to the class I-like SAM-binding methyltransferase superfamily. RNA methyltransferase RlmE family. RlmM subfamily.</text>
</comment>
<comment type="sequence caution" evidence="2">
    <conflict type="erroneous initiation">
        <sequence resource="EMBL-CDS" id="AAC22849"/>
    </conflict>
</comment>
<gene>
    <name evidence="1" type="primary">rlmM</name>
    <name type="ordered locus">HI_1195</name>
</gene>
<reference key="1">
    <citation type="journal article" date="1995" name="Science">
        <title>Whole-genome random sequencing and assembly of Haemophilus influenzae Rd.</title>
        <authorList>
            <person name="Fleischmann R.D."/>
            <person name="Adams M.D."/>
            <person name="White O."/>
            <person name="Clayton R.A."/>
            <person name="Kirkness E.F."/>
            <person name="Kerlavage A.R."/>
            <person name="Bult C.J."/>
            <person name="Tomb J.-F."/>
            <person name="Dougherty B.A."/>
            <person name="Merrick J.M."/>
            <person name="McKenney K."/>
            <person name="Sutton G.G."/>
            <person name="FitzHugh W."/>
            <person name="Fields C.A."/>
            <person name="Gocayne J.D."/>
            <person name="Scott J.D."/>
            <person name="Shirley R."/>
            <person name="Liu L.-I."/>
            <person name="Glodek A."/>
            <person name="Kelley J.M."/>
            <person name="Weidman J.F."/>
            <person name="Phillips C.A."/>
            <person name="Spriggs T."/>
            <person name="Hedblom E."/>
            <person name="Cotton M.D."/>
            <person name="Utterback T.R."/>
            <person name="Hanna M.C."/>
            <person name="Nguyen D.T."/>
            <person name="Saudek D.M."/>
            <person name="Brandon R.C."/>
            <person name="Fine L.D."/>
            <person name="Fritchman J.L."/>
            <person name="Fuhrmann J.L."/>
            <person name="Geoghagen N.S.M."/>
            <person name="Gnehm C.L."/>
            <person name="McDonald L.A."/>
            <person name="Small K.V."/>
            <person name="Fraser C.M."/>
            <person name="Smith H.O."/>
            <person name="Venter J.C."/>
        </authorList>
    </citation>
    <scope>NUCLEOTIDE SEQUENCE [LARGE SCALE GENOMIC DNA]</scope>
    <source>
        <strain>ATCC 51907 / DSM 11121 / KW20 / Rd</strain>
    </source>
</reference>
<sequence>MNKLALYCRPGFEKEVAAEITDQASHLGVFGFARVQDNSGYVIFECYQPDEADRLARDIPFNRLIFARQMMVISDLLEDLDPADRISPIVVAFEELSQQVNFAQSSELFVETADTNEAKELSTFCRKFTVPLRQALKKQGWLSAKASQKCGQFLHCFFVKPNCCYVGYSYVDNHSSHFMGIPRLKFPADAPSRSTLKLEEAILTFIPRKEENKRLNENMIGVDLGACPGGWTYQLVKRGLFVYAVDHGKMAASLHDTGRIEHCAEDGFKFQPPKRKKVDWLVCDMVEQPSRISLLIGKWLLNGWCRETIFNLKLPMKKRYQEVILCLENLAVMLAEQNLNFDIQAKHLYHDREEITVHIALKP</sequence>
<organism>
    <name type="scientific">Haemophilus influenzae (strain ATCC 51907 / DSM 11121 / KW20 / Rd)</name>
    <dbReference type="NCBI Taxonomy" id="71421"/>
    <lineage>
        <taxon>Bacteria</taxon>
        <taxon>Pseudomonadati</taxon>
        <taxon>Pseudomonadota</taxon>
        <taxon>Gammaproteobacteria</taxon>
        <taxon>Pasteurellales</taxon>
        <taxon>Pasteurellaceae</taxon>
        <taxon>Haemophilus</taxon>
    </lineage>
</organism>
<dbReference type="EC" id="2.1.1.186" evidence="1"/>
<dbReference type="EMBL" id="L42023">
    <property type="protein sequence ID" value="AAC22849.1"/>
    <property type="status" value="ALT_INIT"/>
    <property type="molecule type" value="Genomic_DNA"/>
</dbReference>
<dbReference type="PIR" id="H64168">
    <property type="entry name" value="H64168"/>
</dbReference>
<dbReference type="RefSeq" id="NP_439351.1">
    <property type="nucleotide sequence ID" value="NC_000907.1"/>
</dbReference>
<dbReference type="SMR" id="P45100"/>
<dbReference type="STRING" id="71421.HI_1195"/>
<dbReference type="EnsemblBacteria" id="AAC22849">
    <property type="protein sequence ID" value="AAC22849"/>
    <property type="gene ID" value="HI_1195"/>
</dbReference>
<dbReference type="KEGG" id="hin:HI_1195"/>
<dbReference type="PATRIC" id="fig|71421.8.peg.1247"/>
<dbReference type="eggNOG" id="COG2933">
    <property type="taxonomic scope" value="Bacteria"/>
</dbReference>
<dbReference type="HOGENOM" id="CLU_043780_0_0_6"/>
<dbReference type="OrthoDB" id="154490at2"/>
<dbReference type="PhylomeDB" id="P45100"/>
<dbReference type="BioCyc" id="HINF71421:G1GJ1-1226-MONOMER"/>
<dbReference type="Proteomes" id="UP000000579">
    <property type="component" value="Chromosome"/>
</dbReference>
<dbReference type="GO" id="GO:0005737">
    <property type="term" value="C:cytoplasm"/>
    <property type="evidence" value="ECO:0007669"/>
    <property type="project" value="UniProtKB-SubCell"/>
</dbReference>
<dbReference type="GO" id="GO:0070677">
    <property type="term" value="F:rRNA (cytosine-2'-O-)-methyltransferase activity"/>
    <property type="evidence" value="ECO:0000318"/>
    <property type="project" value="GO_Central"/>
</dbReference>
<dbReference type="GO" id="GO:0006364">
    <property type="term" value="P:rRNA processing"/>
    <property type="evidence" value="ECO:0000318"/>
    <property type="project" value="GO_Central"/>
</dbReference>
<dbReference type="Gene3D" id="3.30.2300.20">
    <property type="match status" value="1"/>
</dbReference>
<dbReference type="Gene3D" id="3.30.70.2810">
    <property type="match status" value="1"/>
</dbReference>
<dbReference type="Gene3D" id="3.40.50.150">
    <property type="entry name" value="Vaccinia Virus protein VP39"/>
    <property type="match status" value="1"/>
</dbReference>
<dbReference type="HAMAP" id="MF_01551">
    <property type="entry name" value="23SrRNA_methyltr_M"/>
    <property type="match status" value="1"/>
</dbReference>
<dbReference type="InterPro" id="IPR040739">
    <property type="entry name" value="RlmM_FDX"/>
</dbReference>
<dbReference type="InterPro" id="IPR048646">
    <property type="entry name" value="RlmM_THUMP-like"/>
</dbReference>
<dbReference type="InterPro" id="IPR002877">
    <property type="entry name" value="RNA_MeTrfase_FtsJ_dom"/>
</dbReference>
<dbReference type="InterPro" id="IPR011224">
    <property type="entry name" value="rRNA_MeTrfase_M"/>
</dbReference>
<dbReference type="InterPro" id="IPR029063">
    <property type="entry name" value="SAM-dependent_MTases_sf"/>
</dbReference>
<dbReference type="NCBIfam" id="NF008734">
    <property type="entry name" value="PRK11760.1"/>
    <property type="match status" value="1"/>
</dbReference>
<dbReference type="PANTHER" id="PTHR37524">
    <property type="entry name" value="RIBOSOMAL RNA LARGE SUBUNIT METHYLTRANSFERASE M"/>
    <property type="match status" value="1"/>
</dbReference>
<dbReference type="PANTHER" id="PTHR37524:SF2">
    <property type="entry name" value="RIBOSOMAL RNA METHYLTRANSFERASE FTSJ DOMAIN-CONTAINING PROTEIN"/>
    <property type="match status" value="1"/>
</dbReference>
<dbReference type="Pfam" id="PF01728">
    <property type="entry name" value="FtsJ"/>
    <property type="match status" value="1"/>
</dbReference>
<dbReference type="Pfam" id="PF18125">
    <property type="entry name" value="RlmM_FDX"/>
    <property type="match status" value="1"/>
</dbReference>
<dbReference type="Pfam" id="PF21239">
    <property type="entry name" value="RLMM_N"/>
    <property type="match status" value="1"/>
</dbReference>
<dbReference type="PIRSF" id="PIRSF028774">
    <property type="entry name" value="UCP028774"/>
    <property type="match status" value="1"/>
</dbReference>
<dbReference type="SUPFAM" id="SSF53335">
    <property type="entry name" value="S-adenosyl-L-methionine-dependent methyltransferases"/>
    <property type="match status" value="1"/>
</dbReference>
<keyword id="KW-0963">Cytoplasm</keyword>
<keyword id="KW-0489">Methyltransferase</keyword>
<keyword id="KW-1185">Reference proteome</keyword>
<keyword id="KW-0698">rRNA processing</keyword>
<keyword id="KW-0949">S-adenosyl-L-methionine</keyword>
<keyword id="KW-0808">Transferase</keyword>
<protein>
    <recommendedName>
        <fullName evidence="1">Ribosomal RNA large subunit methyltransferase M</fullName>
        <ecNumber evidence="1">2.1.1.186</ecNumber>
    </recommendedName>
    <alternativeName>
        <fullName evidence="1">23S rRNA (cytidine2498-2'-O)-methyltransferase</fullName>
    </alternativeName>
    <alternativeName>
        <fullName evidence="1">23S rRNA 2'-O-ribose methyltransferase RlmM</fullName>
    </alternativeName>
</protein>